<gene>
    <name type="primary">yajF</name>
    <name type="ordered locus">LL0089</name>
    <name type="ORF">L92204</name>
</gene>
<feature type="chain" id="PRO_0000220577" description="UPF0177 protein YajF">
    <location>
        <begin position="1"/>
        <end position="201"/>
    </location>
</feature>
<feature type="transmembrane region" description="Helical" evidence="1">
    <location>
        <begin position="10"/>
        <end position="30"/>
    </location>
</feature>
<feature type="transmembrane region" description="Helical" evidence="1">
    <location>
        <begin position="44"/>
        <end position="64"/>
    </location>
</feature>
<feature type="transmembrane region" description="Helical" evidence="1">
    <location>
        <begin position="82"/>
        <end position="102"/>
    </location>
</feature>
<feature type="transmembrane region" description="Helical" evidence="1">
    <location>
        <begin position="119"/>
        <end position="139"/>
    </location>
</feature>
<feature type="transmembrane region" description="Helical" evidence="1">
    <location>
        <begin position="159"/>
        <end position="179"/>
    </location>
</feature>
<keyword id="KW-1003">Cell membrane</keyword>
<keyword id="KW-0472">Membrane</keyword>
<keyword id="KW-1185">Reference proteome</keyword>
<keyword id="KW-0812">Transmembrane</keyword>
<keyword id="KW-1133">Transmembrane helix</keyword>
<sequence length="201" mass="23173">MINIWNKSKTVILALFLLFLSQVPLYYVEYENERQNLFGVANKITVNFILIGLLIILIAIMLGIKNGFYKNAKRTLEWKNIILILILIIPSVALDILFSQFIQFHHLGRMDNQIAIDSVMGSLLWFGKILGVALLAPILEESIFRASIYKIFSNNKIAFVFSSLLFTFMHSGYSWVFLIYLPMSLAVTFIYHRRSDVILKS</sequence>
<protein>
    <recommendedName>
        <fullName>UPF0177 protein YajF</fullName>
    </recommendedName>
</protein>
<name>YAJF_LACLA</name>
<comment type="subcellular location">
    <subcellularLocation>
        <location evidence="2">Cell membrane</location>
        <topology evidence="2">Multi-pass membrane protein</topology>
    </subcellularLocation>
</comment>
<comment type="similarity">
    <text evidence="2">Belongs to the UPF0177 family.</text>
</comment>
<accession>Q9CJB0</accession>
<evidence type="ECO:0000255" key="1"/>
<evidence type="ECO:0000305" key="2"/>
<reference key="1">
    <citation type="journal article" date="2001" name="Genome Res.">
        <title>The complete genome sequence of the lactic acid bacterium Lactococcus lactis ssp. lactis IL1403.</title>
        <authorList>
            <person name="Bolotin A."/>
            <person name="Wincker P."/>
            <person name="Mauger S."/>
            <person name="Jaillon O."/>
            <person name="Malarme K."/>
            <person name="Weissenbach J."/>
            <person name="Ehrlich S.D."/>
            <person name="Sorokin A."/>
        </authorList>
    </citation>
    <scope>NUCLEOTIDE SEQUENCE [LARGE SCALE GENOMIC DNA]</scope>
    <source>
        <strain>IL1403</strain>
    </source>
</reference>
<proteinExistence type="inferred from homology"/>
<organism>
    <name type="scientific">Lactococcus lactis subsp. lactis (strain IL1403)</name>
    <name type="common">Streptococcus lactis</name>
    <dbReference type="NCBI Taxonomy" id="272623"/>
    <lineage>
        <taxon>Bacteria</taxon>
        <taxon>Bacillati</taxon>
        <taxon>Bacillota</taxon>
        <taxon>Bacilli</taxon>
        <taxon>Lactobacillales</taxon>
        <taxon>Streptococcaceae</taxon>
        <taxon>Lactococcus</taxon>
    </lineage>
</organism>
<dbReference type="EMBL" id="AE005176">
    <property type="protein sequence ID" value="AAK04187.1"/>
    <property type="molecule type" value="Genomic_DNA"/>
</dbReference>
<dbReference type="PIR" id="A86636">
    <property type="entry name" value="A86636"/>
</dbReference>
<dbReference type="RefSeq" id="NP_266245.1">
    <property type="nucleotide sequence ID" value="NC_002662.1"/>
</dbReference>
<dbReference type="RefSeq" id="WP_010905104.1">
    <property type="nucleotide sequence ID" value="NC_002662.1"/>
</dbReference>
<dbReference type="PaxDb" id="272623-L92204"/>
<dbReference type="EnsemblBacteria" id="AAK04187">
    <property type="protein sequence ID" value="AAK04187"/>
    <property type="gene ID" value="L92204"/>
</dbReference>
<dbReference type="KEGG" id="lla:L92204"/>
<dbReference type="PATRIC" id="fig|272623.7.peg.101"/>
<dbReference type="eggNOG" id="COG1266">
    <property type="taxonomic scope" value="Bacteria"/>
</dbReference>
<dbReference type="HOGENOM" id="CLU_109309_0_0_9"/>
<dbReference type="OrthoDB" id="8607342at2"/>
<dbReference type="Proteomes" id="UP000002196">
    <property type="component" value="Chromosome"/>
</dbReference>
<dbReference type="GO" id="GO:0005886">
    <property type="term" value="C:plasma membrane"/>
    <property type="evidence" value="ECO:0007669"/>
    <property type="project" value="UniProtKB-SubCell"/>
</dbReference>
<dbReference type="GO" id="GO:0004175">
    <property type="term" value="F:endopeptidase activity"/>
    <property type="evidence" value="ECO:0007669"/>
    <property type="project" value="UniProtKB-ARBA"/>
</dbReference>
<dbReference type="GO" id="GO:0080120">
    <property type="term" value="P:CAAX-box protein maturation"/>
    <property type="evidence" value="ECO:0007669"/>
    <property type="project" value="UniProtKB-ARBA"/>
</dbReference>
<dbReference type="InterPro" id="IPR003675">
    <property type="entry name" value="Rce1/LyrA-like_dom"/>
</dbReference>
<dbReference type="Pfam" id="PF02517">
    <property type="entry name" value="Rce1-like"/>
    <property type="match status" value="1"/>
</dbReference>